<evidence type="ECO:0000255" key="1">
    <source>
        <dbReference type="HAMAP-Rule" id="MF_01547"/>
    </source>
</evidence>
<proteinExistence type="inferred from homology"/>
<dbReference type="EC" id="2.1.1.166" evidence="1"/>
<dbReference type="EMBL" id="CP000084">
    <property type="protein sequence ID" value="AAZ21468.1"/>
    <property type="molecule type" value="Genomic_DNA"/>
</dbReference>
<dbReference type="RefSeq" id="WP_006997257.1">
    <property type="nucleotide sequence ID" value="NC_007205.1"/>
</dbReference>
<dbReference type="SMR" id="Q4FMX1"/>
<dbReference type="STRING" id="335992.SAR11_0648"/>
<dbReference type="GeneID" id="66295152"/>
<dbReference type="KEGG" id="pub:SAR11_0648"/>
<dbReference type="eggNOG" id="COG0293">
    <property type="taxonomic scope" value="Bacteria"/>
</dbReference>
<dbReference type="HOGENOM" id="CLU_009422_4_0_5"/>
<dbReference type="OrthoDB" id="9790080at2"/>
<dbReference type="Proteomes" id="UP000002528">
    <property type="component" value="Chromosome"/>
</dbReference>
<dbReference type="GO" id="GO:0005737">
    <property type="term" value="C:cytoplasm"/>
    <property type="evidence" value="ECO:0007669"/>
    <property type="project" value="UniProtKB-SubCell"/>
</dbReference>
<dbReference type="GO" id="GO:0008650">
    <property type="term" value="F:rRNA (uridine-2'-O-)-methyltransferase activity"/>
    <property type="evidence" value="ECO:0007669"/>
    <property type="project" value="UniProtKB-UniRule"/>
</dbReference>
<dbReference type="FunFam" id="3.40.50.150:FF:000220">
    <property type="entry name" value="CAMK protein kinase"/>
    <property type="match status" value="1"/>
</dbReference>
<dbReference type="Gene3D" id="3.40.50.150">
    <property type="entry name" value="Vaccinia Virus protein VP39"/>
    <property type="match status" value="1"/>
</dbReference>
<dbReference type="HAMAP" id="MF_01547">
    <property type="entry name" value="RNA_methyltr_E"/>
    <property type="match status" value="1"/>
</dbReference>
<dbReference type="InterPro" id="IPR050082">
    <property type="entry name" value="RNA_methyltr_RlmE"/>
</dbReference>
<dbReference type="InterPro" id="IPR002877">
    <property type="entry name" value="RNA_MeTrfase_FtsJ_dom"/>
</dbReference>
<dbReference type="InterPro" id="IPR015507">
    <property type="entry name" value="rRNA-MeTfrase_E"/>
</dbReference>
<dbReference type="InterPro" id="IPR029063">
    <property type="entry name" value="SAM-dependent_MTases_sf"/>
</dbReference>
<dbReference type="PANTHER" id="PTHR10920">
    <property type="entry name" value="RIBOSOMAL RNA METHYLTRANSFERASE"/>
    <property type="match status" value="1"/>
</dbReference>
<dbReference type="PANTHER" id="PTHR10920:SF18">
    <property type="entry name" value="RRNA METHYLTRANSFERASE 2, MITOCHONDRIAL"/>
    <property type="match status" value="1"/>
</dbReference>
<dbReference type="Pfam" id="PF01728">
    <property type="entry name" value="FtsJ"/>
    <property type="match status" value="1"/>
</dbReference>
<dbReference type="PIRSF" id="PIRSF005461">
    <property type="entry name" value="23S_rRNA_mtase"/>
    <property type="match status" value="1"/>
</dbReference>
<dbReference type="SUPFAM" id="SSF53335">
    <property type="entry name" value="S-adenosyl-L-methionine-dependent methyltransferases"/>
    <property type="match status" value="1"/>
</dbReference>
<gene>
    <name evidence="1" type="primary">rlmE</name>
    <name evidence="1" type="synonym">ftsJ</name>
    <name evidence="1" type="synonym">rrmJ</name>
    <name type="ordered locus">SAR11_0648</name>
</gene>
<sequence length="203" mass="23167">MKKNRISKNWINKQKRDIYVRQSQVDGYRARSAYKLIEIDEKFKIFKNGISVIDLGASPGSWSQYISRTVKSGRLVSIDLKGMEEIENTIQIKGDFTDLESQEKIKALFKSKVDVVVSDMAVNTTGIKDIDAIYTGELAMEAMNFSKEMLVKEGRFVSKIFLGSSFNEIVALGKKLFKEVKVFKPKSSRKESKESFIICKILR</sequence>
<feature type="chain" id="PRO_0000155517" description="Ribosomal RNA large subunit methyltransferase E">
    <location>
        <begin position="1"/>
        <end position="203"/>
    </location>
</feature>
<feature type="active site" description="Proton acceptor" evidence="1">
    <location>
        <position position="159"/>
    </location>
</feature>
<feature type="binding site" evidence="1">
    <location>
        <position position="60"/>
    </location>
    <ligand>
        <name>S-adenosyl-L-methionine</name>
        <dbReference type="ChEBI" id="CHEBI:59789"/>
    </ligand>
</feature>
<feature type="binding site" evidence="1">
    <location>
        <position position="62"/>
    </location>
    <ligand>
        <name>S-adenosyl-L-methionine</name>
        <dbReference type="ChEBI" id="CHEBI:59789"/>
    </ligand>
</feature>
<feature type="binding site" evidence="1">
    <location>
        <position position="79"/>
    </location>
    <ligand>
        <name>S-adenosyl-L-methionine</name>
        <dbReference type="ChEBI" id="CHEBI:59789"/>
    </ligand>
</feature>
<feature type="binding site" evidence="1">
    <location>
        <position position="95"/>
    </location>
    <ligand>
        <name>S-adenosyl-L-methionine</name>
        <dbReference type="ChEBI" id="CHEBI:59789"/>
    </ligand>
</feature>
<feature type="binding site" evidence="1">
    <location>
        <position position="119"/>
    </location>
    <ligand>
        <name>S-adenosyl-L-methionine</name>
        <dbReference type="ChEBI" id="CHEBI:59789"/>
    </ligand>
</feature>
<reference key="1">
    <citation type="journal article" date="2005" name="Science">
        <title>Genome streamlining in a cosmopolitan oceanic bacterium.</title>
        <authorList>
            <person name="Giovannoni S.J."/>
            <person name="Tripp H.J."/>
            <person name="Givan S."/>
            <person name="Podar M."/>
            <person name="Vergin K.L."/>
            <person name="Baptista D."/>
            <person name="Bibbs L."/>
            <person name="Eads J."/>
            <person name="Richardson T.H."/>
            <person name="Noordewier M."/>
            <person name="Rappe M.S."/>
            <person name="Short J.M."/>
            <person name="Carrington J.C."/>
            <person name="Mathur E.J."/>
        </authorList>
    </citation>
    <scope>NUCLEOTIDE SEQUENCE [LARGE SCALE GENOMIC DNA]</scope>
    <source>
        <strain>HTCC1062</strain>
    </source>
</reference>
<name>RLME_PELUB</name>
<comment type="function">
    <text evidence="1">Specifically methylates the uridine in position 2552 of 23S rRNA at the 2'-O position of the ribose in the fully assembled 50S ribosomal subunit.</text>
</comment>
<comment type="catalytic activity">
    <reaction evidence="1">
        <text>uridine(2552) in 23S rRNA + S-adenosyl-L-methionine = 2'-O-methyluridine(2552) in 23S rRNA + S-adenosyl-L-homocysteine + H(+)</text>
        <dbReference type="Rhea" id="RHEA:42720"/>
        <dbReference type="Rhea" id="RHEA-COMP:10202"/>
        <dbReference type="Rhea" id="RHEA-COMP:10203"/>
        <dbReference type="ChEBI" id="CHEBI:15378"/>
        <dbReference type="ChEBI" id="CHEBI:57856"/>
        <dbReference type="ChEBI" id="CHEBI:59789"/>
        <dbReference type="ChEBI" id="CHEBI:65315"/>
        <dbReference type="ChEBI" id="CHEBI:74478"/>
        <dbReference type="EC" id="2.1.1.166"/>
    </reaction>
</comment>
<comment type="subcellular location">
    <subcellularLocation>
        <location evidence="1">Cytoplasm</location>
    </subcellularLocation>
</comment>
<comment type="similarity">
    <text evidence="1">Belongs to the class I-like SAM-binding methyltransferase superfamily. RNA methyltransferase RlmE family.</text>
</comment>
<keyword id="KW-0963">Cytoplasm</keyword>
<keyword id="KW-0489">Methyltransferase</keyword>
<keyword id="KW-1185">Reference proteome</keyword>
<keyword id="KW-0698">rRNA processing</keyword>
<keyword id="KW-0949">S-adenosyl-L-methionine</keyword>
<keyword id="KW-0808">Transferase</keyword>
<protein>
    <recommendedName>
        <fullName evidence="1">Ribosomal RNA large subunit methyltransferase E</fullName>
        <ecNumber evidence="1">2.1.1.166</ecNumber>
    </recommendedName>
    <alternativeName>
        <fullName evidence="1">23S rRNA Um2552 methyltransferase</fullName>
    </alternativeName>
    <alternativeName>
        <fullName evidence="1">rRNA (uridine-2'-O-)-methyltransferase</fullName>
    </alternativeName>
</protein>
<organism>
    <name type="scientific">Pelagibacter ubique (strain HTCC1062)</name>
    <dbReference type="NCBI Taxonomy" id="335992"/>
    <lineage>
        <taxon>Bacteria</taxon>
        <taxon>Pseudomonadati</taxon>
        <taxon>Pseudomonadota</taxon>
        <taxon>Alphaproteobacteria</taxon>
        <taxon>Candidatus Pelagibacterales</taxon>
        <taxon>Candidatus Pelagibacteraceae</taxon>
        <taxon>Candidatus Pelagibacter</taxon>
    </lineage>
</organism>
<accession>Q4FMX1</accession>